<protein>
    <recommendedName>
        <fullName>Ly6/PLAUR domain-containing protein 1</fullName>
    </recommendedName>
</protein>
<dbReference type="EMBL" id="BC082032">
    <property type="protein sequence ID" value="AAH82032.1"/>
    <property type="molecule type" value="mRNA"/>
</dbReference>
<dbReference type="RefSeq" id="NP_001007728.1">
    <property type="nucleotide sequence ID" value="NM_001007727.1"/>
</dbReference>
<dbReference type="SMR" id="Q66H42"/>
<dbReference type="FunCoup" id="Q66H42">
    <property type="interactions" value="588"/>
</dbReference>
<dbReference type="STRING" id="10116.ENSRNOP00000004741"/>
<dbReference type="GlyCosmos" id="Q66H42">
    <property type="glycosylation" value="1 site, No reported glycans"/>
</dbReference>
<dbReference type="GlyGen" id="Q66H42">
    <property type="glycosylation" value="1 site"/>
</dbReference>
<dbReference type="PhosphoSitePlus" id="Q66H42"/>
<dbReference type="PaxDb" id="10116-ENSRNOP00000004741"/>
<dbReference type="Ensembl" id="ENSRNOT00000004741.6">
    <property type="protein sequence ID" value="ENSRNOP00000004741.3"/>
    <property type="gene ID" value="ENSRNOG00000003453.6"/>
</dbReference>
<dbReference type="GeneID" id="360838"/>
<dbReference type="KEGG" id="rno:360838"/>
<dbReference type="UCSC" id="RGD:1549754">
    <property type="organism name" value="rat"/>
</dbReference>
<dbReference type="AGR" id="RGD:1549754"/>
<dbReference type="CTD" id="116372"/>
<dbReference type="RGD" id="1549754">
    <property type="gene designation" value="Lypd1"/>
</dbReference>
<dbReference type="eggNOG" id="ENOG502S22T">
    <property type="taxonomic scope" value="Eukaryota"/>
</dbReference>
<dbReference type="GeneTree" id="ENSGT00390000002215"/>
<dbReference type="HOGENOM" id="CLU_152037_0_0_1"/>
<dbReference type="InParanoid" id="Q66H42"/>
<dbReference type="OMA" id="TFCGLFW"/>
<dbReference type="PhylomeDB" id="Q66H42"/>
<dbReference type="TreeFam" id="TF332325"/>
<dbReference type="Reactome" id="R-RNO-163125">
    <property type="pathway name" value="Post-translational modification: synthesis of GPI-anchored proteins"/>
</dbReference>
<dbReference type="PRO" id="PR:Q66H42"/>
<dbReference type="Proteomes" id="UP000002494">
    <property type="component" value="Chromosome 13"/>
</dbReference>
<dbReference type="Bgee" id="ENSRNOG00000003453">
    <property type="expression patterns" value="Expressed in brain and 20 other cell types or tissues"/>
</dbReference>
<dbReference type="GO" id="GO:0016020">
    <property type="term" value="C:membrane"/>
    <property type="evidence" value="ECO:0000266"/>
    <property type="project" value="RGD"/>
</dbReference>
<dbReference type="GO" id="GO:0005886">
    <property type="term" value="C:plasma membrane"/>
    <property type="evidence" value="ECO:0007669"/>
    <property type="project" value="UniProtKB-SubCell"/>
</dbReference>
<dbReference type="GO" id="GO:0098552">
    <property type="term" value="C:side of membrane"/>
    <property type="evidence" value="ECO:0007669"/>
    <property type="project" value="UniProtKB-KW"/>
</dbReference>
<dbReference type="GO" id="GO:0045202">
    <property type="term" value="C:synapse"/>
    <property type="evidence" value="ECO:0007669"/>
    <property type="project" value="GOC"/>
</dbReference>
<dbReference type="GO" id="GO:0033130">
    <property type="term" value="F:acetylcholine receptor binding"/>
    <property type="evidence" value="ECO:0000266"/>
    <property type="project" value="RGD"/>
</dbReference>
<dbReference type="GO" id="GO:0030550">
    <property type="term" value="F:acetylcholine receptor inhibitor activity"/>
    <property type="evidence" value="ECO:0000266"/>
    <property type="project" value="RGD"/>
</dbReference>
<dbReference type="GO" id="GO:0095500">
    <property type="term" value="P:acetylcholine receptor signaling pathway"/>
    <property type="evidence" value="ECO:0000266"/>
    <property type="project" value="RGD"/>
</dbReference>
<dbReference type="GO" id="GO:0001662">
    <property type="term" value="P:behavioral fear response"/>
    <property type="evidence" value="ECO:0000266"/>
    <property type="project" value="RGD"/>
</dbReference>
<dbReference type="GO" id="GO:1903077">
    <property type="term" value="P:negative regulation of protein localization to plasma membrane"/>
    <property type="evidence" value="ECO:0000266"/>
    <property type="project" value="RGD"/>
</dbReference>
<dbReference type="GO" id="GO:0072659">
    <property type="term" value="P:protein localization to plasma membrane"/>
    <property type="evidence" value="ECO:0000266"/>
    <property type="project" value="RGD"/>
</dbReference>
<dbReference type="GO" id="GO:0035094">
    <property type="term" value="P:response to nicotine"/>
    <property type="evidence" value="ECO:0000266"/>
    <property type="project" value="RGD"/>
</dbReference>
<dbReference type="GO" id="GO:0007271">
    <property type="term" value="P:synaptic transmission, cholinergic"/>
    <property type="evidence" value="ECO:0000266"/>
    <property type="project" value="RGD"/>
</dbReference>
<dbReference type="CDD" id="cd23559">
    <property type="entry name" value="TFP_LU_ECD_LYPD1"/>
    <property type="match status" value="1"/>
</dbReference>
<dbReference type="InterPro" id="IPR016054">
    <property type="entry name" value="LY6_UPA_recep-like"/>
</dbReference>
<dbReference type="InterPro" id="IPR045860">
    <property type="entry name" value="Snake_toxin-like_sf"/>
</dbReference>
<dbReference type="PANTHER" id="PTHR10036">
    <property type="entry name" value="CD59 GLYCOPROTEIN"/>
    <property type="match status" value="1"/>
</dbReference>
<dbReference type="PANTHER" id="PTHR10036:SF7">
    <property type="entry name" value="LY6_PLAUR DOMAIN-CONTAINING PROTEIN 1"/>
    <property type="match status" value="1"/>
</dbReference>
<dbReference type="Pfam" id="PF00021">
    <property type="entry name" value="UPAR_LY6"/>
    <property type="match status" value="1"/>
</dbReference>
<dbReference type="SUPFAM" id="SSF57302">
    <property type="entry name" value="Snake toxin-like"/>
    <property type="match status" value="1"/>
</dbReference>
<keyword id="KW-1003">Cell membrane</keyword>
<keyword id="KW-1015">Disulfide bond</keyword>
<keyword id="KW-0325">Glycoprotein</keyword>
<keyword id="KW-0336">GPI-anchor</keyword>
<keyword id="KW-0449">Lipoprotein</keyword>
<keyword id="KW-0472">Membrane</keyword>
<keyword id="KW-1185">Reference proteome</keyword>
<keyword id="KW-0732">Signal</keyword>
<evidence type="ECO:0000250" key="1">
    <source>
        <dbReference type="UniProtKB" id="Q8BLC3"/>
    </source>
</evidence>
<evidence type="ECO:0000250" key="2">
    <source>
        <dbReference type="UniProtKB" id="Q8N2G4"/>
    </source>
</evidence>
<evidence type="ECO:0000255" key="3"/>
<evidence type="ECO:0000305" key="4"/>
<reference key="1">
    <citation type="journal article" date="2004" name="Genome Res.">
        <title>The status, quality, and expansion of the NIH full-length cDNA project: the Mammalian Gene Collection (MGC).</title>
        <authorList>
            <consortium name="The MGC Project Team"/>
        </authorList>
    </citation>
    <scope>NUCLEOTIDE SEQUENCE [LARGE SCALE MRNA]</scope>
    <source>
        <tissue>Kidney</tissue>
    </source>
</reference>
<proteinExistence type="evidence at transcript level"/>
<comment type="function">
    <text evidence="1">Believed to act as a modulator of nicotinic acetylcholine receptors (nAChRs) activity. In vitro increases receptor desensitization and decreases affinity for ACh of alpha-4:beta-2-containing nAChRs. May play a role in the intracellular trafficking of alpha-4:beta-2 and alpha-7-containing nAChRs and may inhibit their expression at the cell surface. May be involved in the control of anxiety.</text>
</comment>
<comment type="subunit">
    <text evidence="1">Interacts with CHRNA4 and nAChRs containing alpha-4:beta-2 (CHRNA4:CHRNB2) and alpha-7 (CHRNA7) subunits.</text>
</comment>
<comment type="subcellular location">
    <subcellularLocation>
        <location evidence="4">Cell membrane</location>
        <topology evidence="4">Lipid-anchor</topology>
        <topology evidence="4">GPI-anchor</topology>
    </subcellularLocation>
</comment>
<sequence length="141" mass="15330">MWVLGIAATFCGLFWLPGLALQIQCYQCEEFQLNNDCSSPEFIVNCTVNVQDMCQKEVMEQSAGIMYRKSCASSAACLIASAGYQSFCSPGKLNSVCISCCNTPLCNGPRPKKRGSSASAIRPELFTTVLFFNLALCLAHC</sequence>
<feature type="signal peptide" evidence="3">
    <location>
        <begin position="1"/>
        <end position="20"/>
    </location>
</feature>
<feature type="chain" id="PRO_0000226745" description="Ly6/PLAUR domain-containing protein 1">
    <location>
        <begin position="21"/>
        <end position="115"/>
    </location>
</feature>
<feature type="propeptide" id="PRO_0000226746" description="Removed in mature form" evidence="3">
    <location>
        <begin position="116"/>
        <end position="141"/>
    </location>
</feature>
<feature type="domain" description="UPAR/Ly6">
    <location>
        <begin position="25"/>
        <end position="108"/>
    </location>
</feature>
<feature type="lipid moiety-binding region" description="GPI-anchor amidated glycine" evidence="3">
    <location>
        <position position="115"/>
    </location>
</feature>
<feature type="glycosylation site" description="N-linked (GlcNAc...) asparagine" evidence="3">
    <location>
        <position position="45"/>
    </location>
</feature>
<feature type="disulfide bond" evidence="2">
    <location>
        <begin position="25"/>
        <end position="54"/>
    </location>
</feature>
<feature type="disulfide bond" evidence="2">
    <location>
        <begin position="28"/>
        <end position="37"/>
    </location>
</feature>
<feature type="disulfide bond" evidence="2">
    <location>
        <begin position="46"/>
        <end position="71"/>
    </location>
</feature>
<feature type="disulfide bond" evidence="2">
    <location>
        <begin position="77"/>
        <end position="100"/>
    </location>
</feature>
<feature type="disulfide bond" evidence="2">
    <location>
        <begin position="88"/>
        <end position="97"/>
    </location>
</feature>
<feature type="disulfide bond" evidence="2">
    <location>
        <begin position="101"/>
        <end position="106"/>
    </location>
</feature>
<gene>
    <name type="primary">Lypd1</name>
    <name type="synonym">Lypdc1</name>
</gene>
<accession>Q66H42</accession>
<organism>
    <name type="scientific">Rattus norvegicus</name>
    <name type="common">Rat</name>
    <dbReference type="NCBI Taxonomy" id="10116"/>
    <lineage>
        <taxon>Eukaryota</taxon>
        <taxon>Metazoa</taxon>
        <taxon>Chordata</taxon>
        <taxon>Craniata</taxon>
        <taxon>Vertebrata</taxon>
        <taxon>Euteleostomi</taxon>
        <taxon>Mammalia</taxon>
        <taxon>Eutheria</taxon>
        <taxon>Euarchontoglires</taxon>
        <taxon>Glires</taxon>
        <taxon>Rodentia</taxon>
        <taxon>Myomorpha</taxon>
        <taxon>Muroidea</taxon>
        <taxon>Muridae</taxon>
        <taxon>Murinae</taxon>
        <taxon>Rattus</taxon>
    </lineage>
</organism>
<name>LYPD1_RAT</name>